<accession>A5ULP3</accession>
<gene>
    <name evidence="1" type="primary">thiM</name>
    <name type="ordered locus">Msm_0916</name>
</gene>
<organism>
    <name type="scientific">Methanobrevibacter smithii (strain ATCC 35061 / DSM 861 / OCM 144 / PS)</name>
    <dbReference type="NCBI Taxonomy" id="420247"/>
    <lineage>
        <taxon>Archaea</taxon>
        <taxon>Methanobacteriati</taxon>
        <taxon>Methanobacteriota</taxon>
        <taxon>Methanomada group</taxon>
        <taxon>Methanobacteria</taxon>
        <taxon>Methanobacteriales</taxon>
        <taxon>Methanobacteriaceae</taxon>
        <taxon>Methanobrevibacter</taxon>
    </lineage>
</organism>
<reference key="1">
    <citation type="journal article" date="2007" name="Proc. Natl. Acad. Sci. U.S.A.">
        <title>Genomic and metabolic adaptations of Methanobrevibacter smithii to the human gut.</title>
        <authorList>
            <person name="Samuel B.S."/>
            <person name="Hansen E.E."/>
            <person name="Manchester J.K."/>
            <person name="Coutinho P.M."/>
            <person name="Henrissat B."/>
            <person name="Fulton R."/>
            <person name="Latreille P."/>
            <person name="Kim K."/>
            <person name="Wilson R.K."/>
            <person name="Gordon J.I."/>
        </authorList>
    </citation>
    <scope>NUCLEOTIDE SEQUENCE [LARGE SCALE GENOMIC DNA]</scope>
    <source>
        <strain>ATCC 35061 / DSM 861 / OCM 144 / PS</strain>
    </source>
</reference>
<name>THIM_METS3</name>
<feature type="chain" id="PRO_0000383914" description="Hydroxyethylthiazole kinase">
    <location>
        <begin position="1"/>
        <end position="287"/>
    </location>
</feature>
<feature type="binding site" evidence="1">
    <location>
        <position position="50"/>
    </location>
    <ligand>
        <name>substrate</name>
    </ligand>
</feature>
<feature type="binding site" evidence="1">
    <location>
        <position position="126"/>
    </location>
    <ligand>
        <name>ATP</name>
        <dbReference type="ChEBI" id="CHEBI:30616"/>
    </ligand>
</feature>
<feature type="binding site" evidence="1">
    <location>
        <position position="185"/>
    </location>
    <ligand>
        <name>ATP</name>
        <dbReference type="ChEBI" id="CHEBI:30616"/>
    </ligand>
</feature>
<feature type="binding site" evidence="1">
    <location>
        <position position="212"/>
    </location>
    <ligand>
        <name>substrate</name>
    </ligand>
</feature>
<proteinExistence type="inferred from homology"/>
<comment type="function">
    <text evidence="1">Catalyzes the phosphorylation of the hydroxyl group of 4-methyl-5-beta-hydroxyethylthiazole (THZ).</text>
</comment>
<comment type="catalytic activity">
    <reaction evidence="1">
        <text>5-(2-hydroxyethyl)-4-methylthiazole + ATP = 4-methyl-5-(2-phosphooxyethyl)-thiazole + ADP + H(+)</text>
        <dbReference type="Rhea" id="RHEA:24212"/>
        <dbReference type="ChEBI" id="CHEBI:15378"/>
        <dbReference type="ChEBI" id="CHEBI:17957"/>
        <dbReference type="ChEBI" id="CHEBI:30616"/>
        <dbReference type="ChEBI" id="CHEBI:58296"/>
        <dbReference type="ChEBI" id="CHEBI:456216"/>
        <dbReference type="EC" id="2.7.1.50"/>
    </reaction>
</comment>
<comment type="cofactor">
    <cofactor evidence="1">
        <name>Mg(2+)</name>
        <dbReference type="ChEBI" id="CHEBI:18420"/>
    </cofactor>
</comment>
<comment type="pathway">
    <text evidence="1">Cofactor biosynthesis; thiamine diphosphate biosynthesis; 4-methyl-5-(2-phosphoethyl)-thiazole from 5-(2-hydroxyethyl)-4-methylthiazole: step 1/1.</text>
</comment>
<comment type="similarity">
    <text evidence="1">Belongs to the Thz kinase family.</text>
</comment>
<protein>
    <recommendedName>
        <fullName evidence="1">Hydroxyethylthiazole kinase</fullName>
        <ecNumber evidence="1">2.7.1.50</ecNumber>
    </recommendedName>
    <alternativeName>
        <fullName evidence="1">4-methyl-5-beta-hydroxyethylthiazole kinase</fullName>
        <shortName evidence="1">TH kinase</shortName>
        <shortName evidence="1">Thz kinase</shortName>
    </alternativeName>
</protein>
<keyword id="KW-0067">ATP-binding</keyword>
<keyword id="KW-0418">Kinase</keyword>
<keyword id="KW-0460">Magnesium</keyword>
<keyword id="KW-0479">Metal-binding</keyword>
<keyword id="KW-0547">Nucleotide-binding</keyword>
<keyword id="KW-0784">Thiamine biosynthesis</keyword>
<keyword id="KW-0808">Transferase</keyword>
<dbReference type="EC" id="2.7.1.50" evidence="1"/>
<dbReference type="EMBL" id="CP000678">
    <property type="protein sequence ID" value="ABQ87121.1"/>
    <property type="molecule type" value="Genomic_DNA"/>
</dbReference>
<dbReference type="RefSeq" id="WP_011954169.1">
    <property type="nucleotide sequence ID" value="NZ_CP117965.1"/>
</dbReference>
<dbReference type="SMR" id="A5ULP3"/>
<dbReference type="STRING" id="420247.Msm_0916"/>
<dbReference type="EnsemblBacteria" id="ABQ87121">
    <property type="protein sequence ID" value="ABQ87121"/>
    <property type="gene ID" value="Msm_0916"/>
</dbReference>
<dbReference type="GeneID" id="78817556"/>
<dbReference type="KEGG" id="msi:Msm_0916"/>
<dbReference type="PATRIC" id="fig|420247.28.peg.912"/>
<dbReference type="eggNOG" id="arCOG00019">
    <property type="taxonomic scope" value="Archaea"/>
</dbReference>
<dbReference type="HOGENOM" id="CLU_019943_0_0_2"/>
<dbReference type="UniPathway" id="UPA00060">
    <property type="reaction ID" value="UER00139"/>
</dbReference>
<dbReference type="Proteomes" id="UP000001992">
    <property type="component" value="Chromosome"/>
</dbReference>
<dbReference type="GO" id="GO:0005524">
    <property type="term" value="F:ATP binding"/>
    <property type="evidence" value="ECO:0007669"/>
    <property type="project" value="UniProtKB-UniRule"/>
</dbReference>
<dbReference type="GO" id="GO:0004417">
    <property type="term" value="F:hydroxyethylthiazole kinase activity"/>
    <property type="evidence" value="ECO:0007669"/>
    <property type="project" value="UniProtKB-UniRule"/>
</dbReference>
<dbReference type="GO" id="GO:0000287">
    <property type="term" value="F:magnesium ion binding"/>
    <property type="evidence" value="ECO:0007669"/>
    <property type="project" value="UniProtKB-UniRule"/>
</dbReference>
<dbReference type="GO" id="GO:0009228">
    <property type="term" value="P:thiamine biosynthetic process"/>
    <property type="evidence" value="ECO:0007669"/>
    <property type="project" value="UniProtKB-KW"/>
</dbReference>
<dbReference type="GO" id="GO:0009229">
    <property type="term" value="P:thiamine diphosphate biosynthetic process"/>
    <property type="evidence" value="ECO:0007669"/>
    <property type="project" value="UniProtKB-UniRule"/>
</dbReference>
<dbReference type="CDD" id="cd01170">
    <property type="entry name" value="THZ_kinase"/>
    <property type="match status" value="1"/>
</dbReference>
<dbReference type="Gene3D" id="3.40.1190.20">
    <property type="match status" value="1"/>
</dbReference>
<dbReference type="HAMAP" id="MF_00228">
    <property type="entry name" value="Thz_kinase"/>
    <property type="match status" value="1"/>
</dbReference>
<dbReference type="InterPro" id="IPR000417">
    <property type="entry name" value="Hyethyz_kinase"/>
</dbReference>
<dbReference type="InterPro" id="IPR029056">
    <property type="entry name" value="Ribokinase-like"/>
</dbReference>
<dbReference type="NCBIfam" id="NF006830">
    <property type="entry name" value="PRK09355.1"/>
    <property type="match status" value="1"/>
</dbReference>
<dbReference type="Pfam" id="PF02110">
    <property type="entry name" value="HK"/>
    <property type="match status" value="1"/>
</dbReference>
<dbReference type="PIRSF" id="PIRSF000513">
    <property type="entry name" value="Thz_kinase"/>
    <property type="match status" value="1"/>
</dbReference>
<dbReference type="PRINTS" id="PR01099">
    <property type="entry name" value="HYETHTZKNASE"/>
</dbReference>
<dbReference type="SUPFAM" id="SSF53613">
    <property type="entry name" value="Ribokinase-like"/>
    <property type="match status" value="1"/>
</dbReference>
<sequence length="287" mass="30488">MTNKEKLLQKIPELLNEVKSKNPLTHCITNFVTVNDCANAVLAIGASPIMSEDIEEVAEVVSIADALVINIGKLSHEQVEAMKISSAQANKINTPVILDPVGVGISQLRNKVTLEIIENYKLAAIRGNITEIKTIAKLTGIISESNTAKGVDVSESDIITQDNLNENADVISKLAAKLDTVILASGPIDILSDGETTIAIDNGDEMMPYITGSGCMLSSIVGSCIGATNPLEGTMVAALLMTIAGEKARSKVDSENAGTGSFRAYLIDYLYKLDGQTLINKSNIEIL</sequence>
<evidence type="ECO:0000255" key="1">
    <source>
        <dbReference type="HAMAP-Rule" id="MF_00228"/>
    </source>
</evidence>